<dbReference type="EC" id="2.3.2.29" evidence="1"/>
<dbReference type="EMBL" id="CP000744">
    <property type="protein sequence ID" value="ABR83327.1"/>
    <property type="molecule type" value="Genomic_DNA"/>
</dbReference>
<dbReference type="RefSeq" id="WP_003097644.1">
    <property type="nucleotide sequence ID" value="NC_009656.1"/>
</dbReference>
<dbReference type="SMR" id="A6V4G8"/>
<dbReference type="KEGG" id="pap:PSPA7_2589"/>
<dbReference type="HOGENOM" id="CLU_077607_0_0_6"/>
<dbReference type="Proteomes" id="UP000001582">
    <property type="component" value="Chromosome"/>
</dbReference>
<dbReference type="GO" id="GO:0005737">
    <property type="term" value="C:cytoplasm"/>
    <property type="evidence" value="ECO:0007669"/>
    <property type="project" value="UniProtKB-SubCell"/>
</dbReference>
<dbReference type="GO" id="GO:0004057">
    <property type="term" value="F:arginyl-tRNA--protein transferase activity"/>
    <property type="evidence" value="ECO:0007669"/>
    <property type="project" value="InterPro"/>
</dbReference>
<dbReference type="GO" id="GO:0008914">
    <property type="term" value="F:leucyl-tRNA--protein transferase activity"/>
    <property type="evidence" value="ECO:0007669"/>
    <property type="project" value="UniProtKB-UniRule"/>
</dbReference>
<dbReference type="GO" id="GO:0071596">
    <property type="term" value="P:ubiquitin-dependent protein catabolic process via the N-end rule pathway"/>
    <property type="evidence" value="ECO:0007669"/>
    <property type="project" value="InterPro"/>
</dbReference>
<dbReference type="HAMAP" id="MF_00689">
    <property type="entry name" value="Bpt"/>
    <property type="match status" value="1"/>
</dbReference>
<dbReference type="InterPro" id="IPR016181">
    <property type="entry name" value="Acyl_CoA_acyltransferase"/>
</dbReference>
<dbReference type="InterPro" id="IPR017138">
    <property type="entry name" value="Asp_Glu_LeuTrfase"/>
</dbReference>
<dbReference type="InterPro" id="IPR030700">
    <property type="entry name" value="N-end_Aminoacyl_Trfase"/>
</dbReference>
<dbReference type="InterPro" id="IPR007472">
    <property type="entry name" value="N-end_Aminoacyl_Trfase_C"/>
</dbReference>
<dbReference type="InterPro" id="IPR007471">
    <property type="entry name" value="N-end_Aminoacyl_Trfase_N"/>
</dbReference>
<dbReference type="NCBIfam" id="NF002341">
    <property type="entry name" value="PRK01305.1-1"/>
    <property type="match status" value="1"/>
</dbReference>
<dbReference type="NCBIfam" id="NF002342">
    <property type="entry name" value="PRK01305.1-3"/>
    <property type="match status" value="1"/>
</dbReference>
<dbReference type="NCBIfam" id="NF002345">
    <property type="entry name" value="PRK01305.2-2"/>
    <property type="match status" value="1"/>
</dbReference>
<dbReference type="NCBIfam" id="NF002346">
    <property type="entry name" value="PRK01305.2-3"/>
    <property type="match status" value="1"/>
</dbReference>
<dbReference type="PANTHER" id="PTHR21367">
    <property type="entry name" value="ARGININE-TRNA-PROTEIN TRANSFERASE 1"/>
    <property type="match status" value="1"/>
</dbReference>
<dbReference type="PANTHER" id="PTHR21367:SF1">
    <property type="entry name" value="ARGINYL-TRNA--PROTEIN TRANSFERASE 1"/>
    <property type="match status" value="1"/>
</dbReference>
<dbReference type="Pfam" id="PF04377">
    <property type="entry name" value="ATE_C"/>
    <property type="match status" value="1"/>
</dbReference>
<dbReference type="Pfam" id="PF04376">
    <property type="entry name" value="ATE_N"/>
    <property type="match status" value="1"/>
</dbReference>
<dbReference type="PIRSF" id="PIRSF037208">
    <property type="entry name" value="ATE_pro_prd"/>
    <property type="match status" value="1"/>
</dbReference>
<dbReference type="SUPFAM" id="SSF55729">
    <property type="entry name" value="Acyl-CoA N-acyltransferases (Nat)"/>
    <property type="match status" value="1"/>
</dbReference>
<sequence length="235" mass="27768">MTELARLKFYATQPHPCSYLPEEQATTLFLDPSQPMDTQLYASLSEVGFRRSGDHLYRPHCQHCTACIAARIPVAGFSPNRQQRRILKRNAELQVIRKRPSFNEEYYDLYRRYIEQRHADGDMYPPSRDQFATFLVRDLPFCCFFEFRLHGRLLAIAVTDVLPNGLSAVYTFYDPDEEQRSLGRYAILWQIAETERLGLQAVYLGYWIKNCRKMNYKTQYRPIELFVNQRWVALT</sequence>
<accession>A6V4G8</accession>
<feature type="chain" id="PRO_1000045141" description="Aspartate/glutamate leucyltransferase">
    <location>
        <begin position="1"/>
        <end position="235"/>
    </location>
</feature>
<gene>
    <name evidence="1" type="primary">bpt</name>
    <name type="ordered locus">PSPA7_2589</name>
</gene>
<name>BPT_PSEP7</name>
<keyword id="KW-0012">Acyltransferase</keyword>
<keyword id="KW-0963">Cytoplasm</keyword>
<keyword id="KW-0808">Transferase</keyword>
<organism>
    <name type="scientific">Pseudomonas paraeruginosa (strain DSM 24068 / PA7)</name>
    <name type="common">Pseudomonas aeruginosa (strain PA7)</name>
    <dbReference type="NCBI Taxonomy" id="381754"/>
    <lineage>
        <taxon>Bacteria</taxon>
        <taxon>Pseudomonadati</taxon>
        <taxon>Pseudomonadota</taxon>
        <taxon>Gammaproteobacteria</taxon>
        <taxon>Pseudomonadales</taxon>
        <taxon>Pseudomonadaceae</taxon>
        <taxon>Pseudomonas</taxon>
        <taxon>Pseudomonas paraeruginosa</taxon>
    </lineage>
</organism>
<comment type="function">
    <text evidence="1">Functions in the N-end rule pathway of protein degradation where it conjugates Leu from its aminoacyl-tRNA to the N-termini of proteins containing an N-terminal aspartate or glutamate.</text>
</comment>
<comment type="catalytic activity">
    <reaction evidence="1">
        <text>N-terminal L-glutamyl-[protein] + L-leucyl-tRNA(Leu) = N-terminal L-leucyl-L-glutamyl-[protein] + tRNA(Leu) + H(+)</text>
        <dbReference type="Rhea" id="RHEA:50412"/>
        <dbReference type="Rhea" id="RHEA-COMP:9613"/>
        <dbReference type="Rhea" id="RHEA-COMP:9622"/>
        <dbReference type="Rhea" id="RHEA-COMP:12664"/>
        <dbReference type="Rhea" id="RHEA-COMP:12668"/>
        <dbReference type="ChEBI" id="CHEBI:15378"/>
        <dbReference type="ChEBI" id="CHEBI:64721"/>
        <dbReference type="ChEBI" id="CHEBI:78442"/>
        <dbReference type="ChEBI" id="CHEBI:78494"/>
        <dbReference type="ChEBI" id="CHEBI:133041"/>
        <dbReference type="EC" id="2.3.2.29"/>
    </reaction>
</comment>
<comment type="catalytic activity">
    <reaction evidence="1">
        <text>N-terminal L-aspartyl-[protein] + L-leucyl-tRNA(Leu) = N-terminal L-leucyl-L-aspartyl-[protein] + tRNA(Leu) + H(+)</text>
        <dbReference type="Rhea" id="RHEA:50420"/>
        <dbReference type="Rhea" id="RHEA-COMP:9613"/>
        <dbReference type="Rhea" id="RHEA-COMP:9622"/>
        <dbReference type="Rhea" id="RHEA-COMP:12669"/>
        <dbReference type="Rhea" id="RHEA-COMP:12674"/>
        <dbReference type="ChEBI" id="CHEBI:15378"/>
        <dbReference type="ChEBI" id="CHEBI:64720"/>
        <dbReference type="ChEBI" id="CHEBI:78442"/>
        <dbReference type="ChEBI" id="CHEBI:78494"/>
        <dbReference type="ChEBI" id="CHEBI:133042"/>
        <dbReference type="EC" id="2.3.2.29"/>
    </reaction>
</comment>
<comment type="subcellular location">
    <subcellularLocation>
        <location evidence="1">Cytoplasm</location>
    </subcellularLocation>
</comment>
<comment type="similarity">
    <text evidence="1">Belongs to the R-transferase family. Bpt subfamily.</text>
</comment>
<evidence type="ECO:0000255" key="1">
    <source>
        <dbReference type="HAMAP-Rule" id="MF_00689"/>
    </source>
</evidence>
<protein>
    <recommendedName>
        <fullName evidence="1">Aspartate/glutamate leucyltransferase</fullName>
        <ecNumber evidence="1">2.3.2.29</ecNumber>
    </recommendedName>
</protein>
<reference key="1">
    <citation type="submission" date="2007-06" db="EMBL/GenBank/DDBJ databases">
        <authorList>
            <person name="Dodson R.J."/>
            <person name="Harkins D."/>
            <person name="Paulsen I.T."/>
        </authorList>
    </citation>
    <scope>NUCLEOTIDE SEQUENCE [LARGE SCALE GENOMIC DNA]</scope>
    <source>
        <strain>DSM 24068 / PA7</strain>
    </source>
</reference>
<proteinExistence type="inferred from homology"/>